<dbReference type="EC" id="2.7.7.6"/>
<dbReference type="EMBL" id="AY261360">
    <property type="status" value="NOT_ANNOTATED_CDS"/>
    <property type="molecule type" value="Genomic_DNA"/>
</dbReference>
<dbReference type="SMR" id="P0C8K2"/>
<dbReference type="Proteomes" id="UP000000861">
    <property type="component" value="Segment"/>
</dbReference>
<dbReference type="GO" id="GO:0000428">
    <property type="term" value="C:DNA-directed RNA polymerase complex"/>
    <property type="evidence" value="ECO:0007669"/>
    <property type="project" value="UniProtKB-KW"/>
</dbReference>
<dbReference type="GO" id="GO:0030430">
    <property type="term" value="C:host cell cytoplasm"/>
    <property type="evidence" value="ECO:0007669"/>
    <property type="project" value="UniProtKB-SubCell"/>
</dbReference>
<dbReference type="GO" id="GO:0044423">
    <property type="term" value="C:virion component"/>
    <property type="evidence" value="ECO:0007669"/>
    <property type="project" value="UniProtKB-KW"/>
</dbReference>
<dbReference type="GO" id="GO:0003677">
    <property type="term" value="F:DNA binding"/>
    <property type="evidence" value="ECO:0007669"/>
    <property type="project" value="InterPro"/>
</dbReference>
<dbReference type="GO" id="GO:0003899">
    <property type="term" value="F:DNA-directed RNA polymerase activity"/>
    <property type="evidence" value="ECO:0007669"/>
    <property type="project" value="UniProtKB-EC"/>
</dbReference>
<dbReference type="GO" id="GO:0032549">
    <property type="term" value="F:ribonucleoside binding"/>
    <property type="evidence" value="ECO:0007669"/>
    <property type="project" value="InterPro"/>
</dbReference>
<dbReference type="GO" id="GO:0008270">
    <property type="term" value="F:zinc ion binding"/>
    <property type="evidence" value="ECO:0007669"/>
    <property type="project" value="UniProtKB-KW"/>
</dbReference>
<dbReference type="GO" id="GO:0006351">
    <property type="term" value="P:DNA-templated transcription"/>
    <property type="evidence" value="ECO:0007669"/>
    <property type="project" value="InterPro"/>
</dbReference>
<dbReference type="GO" id="GO:0019083">
    <property type="term" value="P:viral transcription"/>
    <property type="evidence" value="ECO:0007669"/>
    <property type="project" value="UniProtKB-KW"/>
</dbReference>
<dbReference type="Gene3D" id="2.40.50.150">
    <property type="match status" value="1"/>
</dbReference>
<dbReference type="Gene3D" id="3.90.1100.10">
    <property type="match status" value="2"/>
</dbReference>
<dbReference type="Gene3D" id="2.40.270.10">
    <property type="entry name" value="DNA-directed RNA polymerase, subunit 2, domain 6"/>
    <property type="match status" value="1"/>
</dbReference>
<dbReference type="Gene3D" id="3.90.1800.10">
    <property type="entry name" value="RNA polymerase alpha subunit dimerisation domain"/>
    <property type="match status" value="1"/>
</dbReference>
<dbReference type="Gene3D" id="3.90.1110.10">
    <property type="entry name" value="RNA polymerase Rpb2, domain 2"/>
    <property type="match status" value="1"/>
</dbReference>
<dbReference type="InterPro" id="IPR015712">
    <property type="entry name" value="DNA-dir_RNA_pol_su2"/>
</dbReference>
<dbReference type="InterPro" id="IPR007120">
    <property type="entry name" value="DNA-dir_RNAP_su2_dom"/>
</dbReference>
<dbReference type="InterPro" id="IPR037033">
    <property type="entry name" value="DNA-dir_RNAP_su2_hyb_sf"/>
</dbReference>
<dbReference type="InterPro" id="IPR007121">
    <property type="entry name" value="RNA_pol_bsu_CS"/>
</dbReference>
<dbReference type="InterPro" id="IPR007644">
    <property type="entry name" value="RNA_pol_bsu_protrusion"/>
</dbReference>
<dbReference type="InterPro" id="IPR007642">
    <property type="entry name" value="RNA_pol_Rpb2_2"/>
</dbReference>
<dbReference type="InterPro" id="IPR037034">
    <property type="entry name" value="RNA_pol_Rpb2_2_sf"/>
</dbReference>
<dbReference type="InterPro" id="IPR007645">
    <property type="entry name" value="RNA_pol_Rpb2_3"/>
</dbReference>
<dbReference type="InterPro" id="IPR007646">
    <property type="entry name" value="RNA_pol_Rpb2_4"/>
</dbReference>
<dbReference type="InterPro" id="IPR007641">
    <property type="entry name" value="RNA_pol_Rpb2_7"/>
</dbReference>
<dbReference type="InterPro" id="IPR014724">
    <property type="entry name" value="RNA_pol_RPB2_OB-fold"/>
</dbReference>
<dbReference type="PANTHER" id="PTHR20856">
    <property type="entry name" value="DNA-DIRECTED RNA POLYMERASE I SUBUNIT 2"/>
    <property type="match status" value="1"/>
</dbReference>
<dbReference type="Pfam" id="PF04563">
    <property type="entry name" value="RNA_pol_Rpb2_1"/>
    <property type="match status" value="1"/>
</dbReference>
<dbReference type="Pfam" id="PF04561">
    <property type="entry name" value="RNA_pol_Rpb2_2"/>
    <property type="match status" value="1"/>
</dbReference>
<dbReference type="Pfam" id="PF04565">
    <property type="entry name" value="RNA_pol_Rpb2_3"/>
    <property type="match status" value="1"/>
</dbReference>
<dbReference type="Pfam" id="PF04566">
    <property type="entry name" value="RNA_pol_Rpb2_4"/>
    <property type="match status" value="1"/>
</dbReference>
<dbReference type="Pfam" id="PF00562">
    <property type="entry name" value="RNA_pol_Rpb2_6"/>
    <property type="match status" value="1"/>
</dbReference>
<dbReference type="Pfam" id="PF04560">
    <property type="entry name" value="RNA_pol_Rpb2_7"/>
    <property type="match status" value="1"/>
</dbReference>
<dbReference type="SUPFAM" id="SSF64484">
    <property type="entry name" value="beta and beta-prime subunits of DNA dependent RNA-polymerase"/>
    <property type="match status" value="1"/>
</dbReference>
<dbReference type="PROSITE" id="PS01166">
    <property type="entry name" value="RNA_POL_BETA"/>
    <property type="match status" value="1"/>
</dbReference>
<organism>
    <name type="scientific">African swine fever virus (isolate Pig/Kenya/KEN-50/1950)</name>
    <name type="common">ASFV</name>
    <dbReference type="NCBI Taxonomy" id="561445"/>
    <lineage>
        <taxon>Viruses</taxon>
        <taxon>Varidnaviria</taxon>
        <taxon>Bamfordvirae</taxon>
        <taxon>Nucleocytoviricota</taxon>
        <taxon>Pokkesviricetes</taxon>
        <taxon>Asfuvirales</taxon>
        <taxon>Asfarviridae</taxon>
        <taxon>Asfivirus</taxon>
        <taxon>African swine fever virus</taxon>
    </lineage>
</organism>
<comment type="function">
    <text evidence="1">Catalytic component of the DNA-directed RNA polymerase (RNAP) that catalyzes the transcription in the cytoplasm of viral DNA into RNA using the four ribonucleoside triphosphates as substrates (By similarity). Forms the polymerase active center together with RPB1 (By similarity). Part of the core element with the central large cleft, the clamp element that moves to open and close the cleft and the jaws that are thought to grab the incoming DNA template (By similarity).</text>
</comment>
<comment type="catalytic activity">
    <reaction>
        <text>RNA(n) + a ribonucleoside 5'-triphosphate = RNA(n+1) + diphosphate</text>
        <dbReference type="Rhea" id="RHEA:21248"/>
        <dbReference type="Rhea" id="RHEA-COMP:14527"/>
        <dbReference type="Rhea" id="RHEA-COMP:17342"/>
        <dbReference type="ChEBI" id="CHEBI:33019"/>
        <dbReference type="ChEBI" id="CHEBI:61557"/>
        <dbReference type="ChEBI" id="CHEBI:140395"/>
        <dbReference type="EC" id="2.7.7.6"/>
    </reaction>
</comment>
<comment type="subunit">
    <text evidence="2">Part of the viral DNA-directed RNA polymerase that consists of 8 polII-like subunits (RPB1, RPB2, RPB3, RPB5, RPB6, RPB7, RPB9, RPB10), a capping enzyme and a termination factor.</text>
</comment>
<comment type="subcellular location">
    <subcellularLocation>
        <location evidence="3">Host cytoplasm</location>
    </subcellularLocation>
    <subcellularLocation>
        <location evidence="2">Virion</location>
    </subcellularLocation>
    <text evidence="2">Found in association with viral nucleoid.</text>
</comment>
<comment type="induction">
    <text evidence="2">Expressed in the late phase of the viral replicative cycle.</text>
</comment>
<comment type="miscellaneous">
    <text evidence="1">The binding of ribonucleoside triphosphate to the RNA polymerase transcribing complex probably involves a two-step mechanism. The initial binding seems to occur at the entry (E) site and involves a magnesium ion coordinated by three conserved aspartate residues of the two largest RNA Pol subunits.</text>
</comment>
<comment type="similarity">
    <text evidence="3">Belongs to the RNA polymerase beta chain family.</text>
</comment>
<sequence length="1242" mass="139764">MEPLRPQITYGPIETVDNEELTEADMLSFISAAVNSTGLIGYNIKSFDDLMDNGIPQIVKQMFNVDITYKDQRDHTEIDKLRESVQIQFNFTDVNIERPQHRNYSQGNKINLLPNKARLSGLSYSGPVKLAAEVILTAHYSNGRQEVKRASIPPFQVSTFPIMRGSNRCHTHDLSKTAKKEIGEDPNEPGGYFIARGGEWVVDLLENIRFNTLHIHYHTMQQGNNEIIRGEFISQPGGAFENSSQIIIRYMTTGAITIEINSTKFSKLRIPWYLIFRMFGMTGDDSIIEQVVFDLESNSPVNTFMIEILEKSIHVSDPIFQPVQHELNREKIIQFLSEKVSKFVSNPSAYKSDENAVQYLNERQLTILDKILLPHMGQTADTRVRKLRFLGLLIHKILLVIMNVFPPTDRDSYRTKRVHGSGVSLAKAFKAIFNTSVIAPIINGFKELLKQTAFEELTQRNIIEAFSAALSKNTASDLNRSMEQSIISGNKTIMVRQRPIVNRVSTQSLERKNLLNTISALRTVNTHSTTNASKQTERADMMRRVHASYPGYICVAQSADTGEKVGMSKQLAITANVCTAGEVLSLKQRLLSDPAIQQLADVSNKDIVRKGLARVFINGEWIGCCTNAFELAQRYRMLRREGKIVHPHTTIYWDSMVDEVEFWLDVGRLTRPLLIVDNNIEKYNEACYKAAEARKKGNKDWEKHKISFVQNTRFTSQMAKAILAGTLTLEDLVAQGICEFITPEEAENCLVAFSITELRKHKHDVTRRFTHVDVPQSILGLAALVSPYANCTQPARVTYETNQGRQTGGWYCFSWPYRVDMNRFFQFYNEMPLVKTIAHNYVIPNGLNTIVAYMIYGGYNQEDSVIVSQSFIDRGGFAGTFYREEKVELESDIESFGKPDPLITKNLKPGANYEKLVDGFVPVGTVVKKGDIIIGKVAKIRGEKDELNKYIDRSVMYGFDEPAVVDAVMRPHGPNDEIFGLMRLRYERNLNIGDKMSSRSGNKGIAALALPTSDMPFTEDGLQPDLIVNPHSHPSRMTNGQMIETTVGLANALQGVVTDGTAFLPINVQLLSERLAQEGLRFNGCQKMFNGQTGEYFDAAIFIGPTYHQRLQKFVLDDRYAVASYGPTDALTGQPLDGKRSHGGLRLGEMEHWVLTAQGAMQTIIEKSHDDSDGCISYICRNCGEPAIYNASHPIYKCMNCDVQADISMVDSRRSSIVFQHEMRAANVNITSVLSPRVFQPA</sequence>
<reference key="1">
    <citation type="submission" date="2003-03" db="EMBL/GenBank/DDBJ databases">
        <title>African swine fever virus genomes.</title>
        <authorList>
            <person name="Kutish G.F."/>
            <person name="Rock D.L."/>
        </authorList>
    </citation>
    <scope>NUCLEOTIDE SEQUENCE [LARGE SCALE GENOMIC DNA]</scope>
</reference>
<gene>
    <name type="ordered locus">Ken-065</name>
</gene>
<name>RPB2_ASFK5</name>
<evidence type="ECO:0000250" key="1">
    <source>
        <dbReference type="UniProtKB" id="P30876"/>
    </source>
</evidence>
<evidence type="ECO:0000250" key="2">
    <source>
        <dbReference type="UniProtKB" id="P42487"/>
    </source>
</evidence>
<evidence type="ECO:0000305" key="3"/>
<keyword id="KW-0240">DNA-directed RNA polymerase</keyword>
<keyword id="KW-1035">Host cytoplasm</keyword>
<keyword id="KW-0479">Metal-binding</keyword>
<keyword id="KW-0548">Nucleotidyltransferase</keyword>
<keyword id="KW-0804">Transcription</keyword>
<keyword id="KW-0808">Transferase</keyword>
<keyword id="KW-1195">Viral transcription</keyword>
<keyword id="KW-0946">Virion</keyword>
<keyword id="KW-0862">Zinc</keyword>
<keyword id="KW-0863">Zinc-finger</keyword>
<protein>
    <recommendedName>
        <fullName>DNA-directed RNA polymerase RPB2 homolog</fullName>
        <shortName evidence="3">RPB2 homolog</shortName>
        <ecNumber>2.7.7.6</ecNumber>
    </recommendedName>
</protein>
<accession>P0C8K2</accession>
<organismHost>
    <name type="scientific">Ornithodoros</name>
    <name type="common">relapsing fever ticks</name>
    <dbReference type="NCBI Taxonomy" id="6937"/>
</organismHost>
<organismHost>
    <name type="scientific">Phacochoerus aethiopicus</name>
    <name type="common">Warthog</name>
    <dbReference type="NCBI Taxonomy" id="85517"/>
</organismHost>
<organismHost>
    <name type="scientific">Phacochoerus africanus</name>
    <name type="common">Warthog</name>
    <dbReference type="NCBI Taxonomy" id="41426"/>
</organismHost>
<organismHost>
    <name type="scientific">Potamochoerus larvatus</name>
    <name type="common">Bushpig</name>
    <dbReference type="NCBI Taxonomy" id="273792"/>
</organismHost>
<organismHost>
    <name type="scientific">Sus scrofa</name>
    <name type="common">Pig</name>
    <dbReference type="NCBI Taxonomy" id="9823"/>
</organismHost>
<proteinExistence type="inferred from homology"/>
<feature type="chain" id="PRO_0000355625" description="DNA-directed RNA polymerase RPB2 homolog">
    <location>
        <begin position="1"/>
        <end position="1242"/>
    </location>
</feature>
<feature type="zinc finger region" description="C4-type">
    <location>
        <begin position="1180"/>
        <end position="1201"/>
    </location>
</feature>